<organism>
    <name type="scientific">Arabidopsis thaliana</name>
    <name type="common">Mouse-ear cress</name>
    <dbReference type="NCBI Taxonomy" id="3702"/>
    <lineage>
        <taxon>Eukaryota</taxon>
        <taxon>Viridiplantae</taxon>
        <taxon>Streptophyta</taxon>
        <taxon>Embryophyta</taxon>
        <taxon>Tracheophyta</taxon>
        <taxon>Spermatophyta</taxon>
        <taxon>Magnoliopsida</taxon>
        <taxon>eudicotyledons</taxon>
        <taxon>Gunneridae</taxon>
        <taxon>Pentapetalae</taxon>
        <taxon>rosids</taxon>
        <taxon>malvids</taxon>
        <taxon>Brassicales</taxon>
        <taxon>Brassicaceae</taxon>
        <taxon>Camelineae</taxon>
        <taxon>Arabidopsis</taxon>
    </lineage>
</organism>
<comment type="function">
    <text evidence="5">Together with RGLG1, mediates the ubiquitination and subsequent proteasomal degradation of the target protein PP2CA. Functions as a positive regulator of abscisic acid (ABA) signaling through ABA-dependent degradation of PP2CA, a major inhibitor of ABA signaling.</text>
</comment>
<comment type="catalytic activity">
    <reaction evidence="7">
        <text>S-ubiquitinyl-[E2 ubiquitin-conjugating enzyme]-L-cysteine + [acceptor protein]-L-lysine = [E2 ubiquitin-conjugating enzyme]-L-cysteine + N(6)-ubiquitinyl-[acceptor protein]-L-lysine.</text>
        <dbReference type="EC" id="2.3.2.27"/>
    </reaction>
</comment>
<comment type="subunit">
    <text evidence="5">Interacts with PP2CA.</text>
</comment>
<comment type="subcellular location">
    <subcellularLocation>
        <location evidence="7">Cell membrane</location>
        <topology evidence="7">Lipid-anchor</topology>
    </subcellularLocation>
</comment>
<comment type="alternative products">
    <event type="alternative splicing"/>
    <isoform>
        <id>Q8LB88-1</id>
        <name>1</name>
        <sequence type="displayed"/>
    </isoform>
    <text evidence="7">A number of isoforms are produced. According to EST sequences.</text>
</comment>
<comment type="PTM">
    <text evidence="7">N-myristoylated.</text>
</comment>
<protein>
    <recommendedName>
        <fullName evidence="7">E3 ubiquitin-protein ligase RGLG5</fullName>
        <ecNumber evidence="7">2.3.2.27</ecNumber>
    </recommendedName>
    <alternativeName>
        <fullName evidence="6">RING domain ligase 5</fullName>
    </alternativeName>
</protein>
<proteinExistence type="evidence at protein level"/>
<keyword id="KW-0002">3D-structure</keyword>
<keyword id="KW-0938">Abscisic acid signaling pathway</keyword>
<keyword id="KW-0025">Alternative splicing</keyword>
<keyword id="KW-1003">Cell membrane</keyword>
<keyword id="KW-0449">Lipoprotein</keyword>
<keyword id="KW-0472">Membrane</keyword>
<keyword id="KW-0479">Metal-binding</keyword>
<keyword id="KW-0519">Myristate</keyword>
<keyword id="KW-1185">Reference proteome</keyword>
<keyword id="KW-0808">Transferase</keyword>
<keyword id="KW-0833">Ubl conjugation pathway</keyword>
<keyword id="KW-0862">Zinc</keyword>
<keyword id="KW-0863">Zinc-finger</keyword>
<accession>Q8LB88</accession>
<sequence length="433" mass="47498">MGGSSSKESPRGGGSGRRYERSVSGSSSYSSAWDQSSYYQTPNHPSASPVSSYNSGRQTPKNLERKYSRIADNYRSIDEVTAALSHAGLESSNLIVGIDVTKSNEWTGARSFGRKSLHFIGTTPNPYQQAISIIGKTLSVFDEDNLIPCYGFGDATTHDQDVFSFNPNDTYCNGFEEVLMCYREIVPQLRLSGPTSFAPIIERAMTIVEESGGQYHVLLIIADGQVTRSVDTDNGGFSPQEQQTIDAIVRASEYPLSIVLVGVGDGPWDTMRQFDDNIPARAFDNFQFVNFTDIMSKNIDPARKEAEFALSALMEIPSQYKATLELGLLGQRTGHCPDRIALPPPTYATQSMRNSPRTSRSTSFQNKPYDNGVSSTPPSTTHNESQQQFCPVCLVSAKNMAFNCGHQTCAGCGEDLHVCPICRSSISVRIKLY</sequence>
<gene>
    <name evidence="6" type="primary">RGLG5</name>
    <name evidence="8" type="ordered locus">At1g67800</name>
</gene>
<reference key="1">
    <citation type="journal article" date="2000" name="Nature">
        <title>Sequence and analysis of chromosome 1 of the plant Arabidopsis thaliana.</title>
        <authorList>
            <person name="Theologis A."/>
            <person name="Ecker J.R."/>
            <person name="Palm C.J."/>
            <person name="Federspiel N.A."/>
            <person name="Kaul S."/>
            <person name="White O."/>
            <person name="Alonso J."/>
            <person name="Altafi H."/>
            <person name="Araujo R."/>
            <person name="Bowman C.L."/>
            <person name="Brooks S.Y."/>
            <person name="Buehler E."/>
            <person name="Chan A."/>
            <person name="Chao Q."/>
            <person name="Chen H."/>
            <person name="Cheuk R.F."/>
            <person name="Chin C.W."/>
            <person name="Chung M.K."/>
            <person name="Conn L."/>
            <person name="Conway A.B."/>
            <person name="Conway A.R."/>
            <person name="Creasy T.H."/>
            <person name="Dewar K."/>
            <person name="Dunn P."/>
            <person name="Etgu P."/>
            <person name="Feldblyum T.V."/>
            <person name="Feng J.-D."/>
            <person name="Fong B."/>
            <person name="Fujii C.Y."/>
            <person name="Gill J.E."/>
            <person name="Goldsmith A.D."/>
            <person name="Haas B."/>
            <person name="Hansen N.F."/>
            <person name="Hughes B."/>
            <person name="Huizar L."/>
            <person name="Hunter J.L."/>
            <person name="Jenkins J."/>
            <person name="Johnson-Hopson C."/>
            <person name="Khan S."/>
            <person name="Khaykin E."/>
            <person name="Kim C.J."/>
            <person name="Koo H.L."/>
            <person name="Kremenetskaia I."/>
            <person name="Kurtz D.B."/>
            <person name="Kwan A."/>
            <person name="Lam B."/>
            <person name="Langin-Hooper S."/>
            <person name="Lee A."/>
            <person name="Lee J.M."/>
            <person name="Lenz C.A."/>
            <person name="Li J.H."/>
            <person name="Li Y.-P."/>
            <person name="Lin X."/>
            <person name="Liu S.X."/>
            <person name="Liu Z.A."/>
            <person name="Luros J.S."/>
            <person name="Maiti R."/>
            <person name="Marziali A."/>
            <person name="Militscher J."/>
            <person name="Miranda M."/>
            <person name="Nguyen M."/>
            <person name="Nierman W.C."/>
            <person name="Osborne B.I."/>
            <person name="Pai G."/>
            <person name="Peterson J."/>
            <person name="Pham P.K."/>
            <person name="Rizzo M."/>
            <person name="Rooney T."/>
            <person name="Rowley D."/>
            <person name="Sakano H."/>
            <person name="Salzberg S.L."/>
            <person name="Schwartz J.R."/>
            <person name="Shinn P."/>
            <person name="Southwick A.M."/>
            <person name="Sun H."/>
            <person name="Tallon L.J."/>
            <person name="Tambunga G."/>
            <person name="Toriumi M.J."/>
            <person name="Town C.D."/>
            <person name="Utterback T."/>
            <person name="Van Aken S."/>
            <person name="Vaysberg M."/>
            <person name="Vysotskaia V.S."/>
            <person name="Walker M."/>
            <person name="Wu D."/>
            <person name="Yu G."/>
            <person name="Fraser C.M."/>
            <person name="Venter J.C."/>
            <person name="Davis R.W."/>
        </authorList>
    </citation>
    <scope>NUCLEOTIDE SEQUENCE [LARGE SCALE GENOMIC DNA]</scope>
    <source>
        <strain>cv. Columbia</strain>
    </source>
</reference>
<reference key="2">
    <citation type="journal article" date="2017" name="Plant J.">
        <title>Araport11: a complete reannotation of the Arabidopsis thaliana reference genome.</title>
        <authorList>
            <person name="Cheng C.Y."/>
            <person name="Krishnakumar V."/>
            <person name="Chan A.P."/>
            <person name="Thibaud-Nissen F."/>
            <person name="Schobel S."/>
            <person name="Town C.D."/>
        </authorList>
    </citation>
    <scope>GENOME REANNOTATION</scope>
    <source>
        <strain>cv. Columbia</strain>
    </source>
</reference>
<reference key="3">
    <citation type="submission" date="2006-12" db="EMBL/GenBank/DDBJ databases">
        <title>Arabidopsis ORF clones.</title>
        <authorList>
            <person name="Bautista V.R."/>
            <person name="Kim C.J."/>
            <person name="Chen H."/>
            <person name="Wu S.Y."/>
            <person name="De Los Reyes C."/>
            <person name="Ecker J.R."/>
        </authorList>
    </citation>
    <scope>NUCLEOTIDE SEQUENCE [LARGE SCALE MRNA]</scope>
    <source>
        <strain>cv. Columbia</strain>
    </source>
</reference>
<reference key="4">
    <citation type="submission" date="2002-03" db="EMBL/GenBank/DDBJ databases">
        <title>Full-length cDNA from Arabidopsis thaliana.</title>
        <authorList>
            <person name="Brover V.V."/>
            <person name="Troukhan M.E."/>
            <person name="Alexandrov N.A."/>
            <person name="Lu Y.-P."/>
            <person name="Flavell R.B."/>
            <person name="Feldmann K.A."/>
        </authorList>
    </citation>
    <scope>NUCLEOTIDE SEQUENCE [LARGE SCALE MRNA]</scope>
</reference>
<reference key="5">
    <citation type="journal article" date="2016" name="Plant Cell">
        <title>Ubiquitin ligases RGLG1 and RGLG5 regulate abscisic acid signaling by controlling the turnover of phosphatase PP2CA.</title>
        <authorList>
            <person name="Wu Q."/>
            <person name="Zhang X."/>
            <person name="Peirats-Llobet M."/>
            <person name="Belda-Palazon B."/>
            <person name="Wang X."/>
            <person name="Cui S."/>
            <person name="Yu X."/>
            <person name="Rodriguez P.L."/>
            <person name="An C."/>
        </authorList>
    </citation>
    <scope>FUNCTION</scope>
    <scope>INTERACTION WITH PP2CA</scope>
</reference>
<name>RGLG5_ARATH</name>
<evidence type="ECO:0000255" key="1"/>
<evidence type="ECO:0000255" key="2">
    <source>
        <dbReference type="PROSITE-ProRule" id="PRU00175"/>
    </source>
</evidence>
<evidence type="ECO:0000255" key="3">
    <source>
        <dbReference type="PROSITE-ProRule" id="PRU00219"/>
    </source>
</evidence>
<evidence type="ECO:0000256" key="4">
    <source>
        <dbReference type="SAM" id="MobiDB-lite"/>
    </source>
</evidence>
<evidence type="ECO:0000269" key="5">
    <source>
    </source>
</evidence>
<evidence type="ECO:0000303" key="6">
    <source>
    </source>
</evidence>
<evidence type="ECO:0000305" key="7"/>
<evidence type="ECO:0000312" key="8">
    <source>
        <dbReference type="Araport" id="AT1G67800"/>
    </source>
</evidence>
<feature type="initiator methionine" description="Removed" evidence="1">
    <location>
        <position position="1"/>
    </location>
</feature>
<feature type="chain" id="PRO_0000438718" description="E3 ubiquitin-protein ligase RGLG5">
    <location>
        <begin position="2"/>
        <end position="433"/>
    </location>
</feature>
<feature type="domain" description="VWFA" evidence="3">
    <location>
        <begin position="93"/>
        <end position="313"/>
    </location>
</feature>
<feature type="zinc finger region" description="RING-type" evidence="2">
    <location>
        <begin position="390"/>
        <end position="423"/>
    </location>
</feature>
<feature type="region of interest" description="Disordered" evidence="4">
    <location>
        <begin position="1"/>
        <end position="61"/>
    </location>
</feature>
<feature type="region of interest" description="Disordered" evidence="4">
    <location>
        <begin position="340"/>
        <end position="383"/>
    </location>
</feature>
<feature type="compositionally biased region" description="Low complexity" evidence="4">
    <location>
        <begin position="22"/>
        <end position="39"/>
    </location>
</feature>
<feature type="compositionally biased region" description="Polar residues" evidence="4">
    <location>
        <begin position="40"/>
        <end position="61"/>
    </location>
</feature>
<feature type="compositionally biased region" description="Polar residues" evidence="4">
    <location>
        <begin position="347"/>
        <end position="383"/>
    </location>
</feature>
<feature type="lipid moiety-binding region" description="N-myristoyl glycine" evidence="1">
    <location>
        <position position="2"/>
    </location>
</feature>
<dbReference type="EC" id="2.3.2.27" evidence="7"/>
<dbReference type="EMBL" id="AC008113">
    <property type="status" value="NOT_ANNOTATED_CDS"/>
    <property type="molecule type" value="Genomic_DNA"/>
</dbReference>
<dbReference type="EMBL" id="CP002684">
    <property type="protein sequence ID" value="AEE34697.1"/>
    <property type="molecule type" value="Genomic_DNA"/>
</dbReference>
<dbReference type="EMBL" id="CP002684">
    <property type="protein sequence ID" value="AEE34699.1"/>
    <property type="molecule type" value="Genomic_DNA"/>
</dbReference>
<dbReference type="EMBL" id="CP002684">
    <property type="protein sequence ID" value="AEE34700.1"/>
    <property type="molecule type" value="Genomic_DNA"/>
</dbReference>
<dbReference type="EMBL" id="CP002684">
    <property type="protein sequence ID" value="ANM59315.1"/>
    <property type="molecule type" value="Genomic_DNA"/>
</dbReference>
<dbReference type="EMBL" id="BT029741">
    <property type="protein sequence ID" value="ABM06011.1"/>
    <property type="molecule type" value="mRNA"/>
</dbReference>
<dbReference type="EMBL" id="AY087355">
    <property type="protein sequence ID" value="AAM64905.1"/>
    <property type="molecule type" value="mRNA"/>
</dbReference>
<dbReference type="RefSeq" id="NP_001077787.1">
    <molecule id="Q8LB88-1"/>
    <property type="nucleotide sequence ID" value="NM_001084318.3"/>
</dbReference>
<dbReference type="RefSeq" id="NP_001319339.1">
    <molecule id="Q8LB88-1"/>
    <property type="nucleotide sequence ID" value="NM_001334325.1"/>
</dbReference>
<dbReference type="RefSeq" id="NP_564907.1">
    <molecule id="Q8LB88-1"/>
    <property type="nucleotide sequence ID" value="NM_105448.5"/>
</dbReference>
<dbReference type="RefSeq" id="NP_974100.1">
    <molecule id="Q8LB88-1"/>
    <property type="nucleotide sequence ID" value="NM_202371.2"/>
</dbReference>
<dbReference type="PDB" id="8XT5">
    <property type="method" value="X-ray"/>
    <property type="resolution" value="1.39 A"/>
    <property type="chains" value="A=65-345"/>
</dbReference>
<dbReference type="PDBsum" id="8XT5"/>
<dbReference type="SMR" id="Q8LB88"/>
<dbReference type="FunCoup" id="Q8LB88">
    <property type="interactions" value="2"/>
</dbReference>
<dbReference type="IntAct" id="Q8LB88">
    <property type="interactions" value="5"/>
</dbReference>
<dbReference type="STRING" id="3702.Q8LB88"/>
<dbReference type="iPTMnet" id="Q8LB88"/>
<dbReference type="PaxDb" id="3702-AT1G67800.2"/>
<dbReference type="EnsemblPlants" id="AT1G67800.1">
    <molecule id="Q8LB88-1"/>
    <property type="protein sequence ID" value="AT1G67800.1"/>
    <property type="gene ID" value="AT1G67800"/>
</dbReference>
<dbReference type="EnsemblPlants" id="AT1G67800.3">
    <molecule id="Q8LB88-1"/>
    <property type="protein sequence ID" value="AT1G67800.3"/>
    <property type="gene ID" value="AT1G67800"/>
</dbReference>
<dbReference type="EnsemblPlants" id="AT1G67800.4">
    <molecule id="Q8LB88-1"/>
    <property type="protein sequence ID" value="AT1G67800.4"/>
    <property type="gene ID" value="AT1G67800"/>
</dbReference>
<dbReference type="EnsemblPlants" id="AT1G67800.6">
    <molecule id="Q8LB88-1"/>
    <property type="protein sequence ID" value="AT1G67800.6"/>
    <property type="gene ID" value="AT1G67800"/>
</dbReference>
<dbReference type="GeneID" id="843106"/>
<dbReference type="Gramene" id="AT1G67800.1">
    <molecule id="Q8LB88-1"/>
    <property type="protein sequence ID" value="AT1G67800.1"/>
    <property type="gene ID" value="AT1G67800"/>
</dbReference>
<dbReference type="Gramene" id="AT1G67800.3">
    <molecule id="Q8LB88-1"/>
    <property type="protein sequence ID" value="AT1G67800.3"/>
    <property type="gene ID" value="AT1G67800"/>
</dbReference>
<dbReference type="Gramene" id="AT1G67800.4">
    <molecule id="Q8LB88-1"/>
    <property type="protein sequence ID" value="AT1G67800.4"/>
    <property type="gene ID" value="AT1G67800"/>
</dbReference>
<dbReference type="Gramene" id="AT1G67800.6">
    <molecule id="Q8LB88-1"/>
    <property type="protein sequence ID" value="AT1G67800.6"/>
    <property type="gene ID" value="AT1G67800"/>
</dbReference>
<dbReference type="KEGG" id="ath:AT1G67800"/>
<dbReference type="Araport" id="AT1G67800"/>
<dbReference type="TAIR" id="AT1G67800">
    <property type="gene designation" value="RGLG5"/>
</dbReference>
<dbReference type="eggNOG" id="KOG1327">
    <property type="taxonomic scope" value="Eukaryota"/>
</dbReference>
<dbReference type="HOGENOM" id="CLU_035766_1_0_1"/>
<dbReference type="InParanoid" id="Q8LB88"/>
<dbReference type="OrthoDB" id="5855668at2759"/>
<dbReference type="PhylomeDB" id="Q8LB88"/>
<dbReference type="PRO" id="PR:Q8LB88"/>
<dbReference type="Proteomes" id="UP000006548">
    <property type="component" value="Chromosome 1"/>
</dbReference>
<dbReference type="ExpressionAtlas" id="Q8LB88">
    <property type="expression patterns" value="baseline and differential"/>
</dbReference>
<dbReference type="GO" id="GO:0005886">
    <property type="term" value="C:plasma membrane"/>
    <property type="evidence" value="ECO:0007669"/>
    <property type="project" value="UniProtKB-SubCell"/>
</dbReference>
<dbReference type="GO" id="GO:0016740">
    <property type="term" value="F:transferase activity"/>
    <property type="evidence" value="ECO:0007669"/>
    <property type="project" value="UniProtKB-KW"/>
</dbReference>
<dbReference type="GO" id="GO:0008270">
    <property type="term" value="F:zinc ion binding"/>
    <property type="evidence" value="ECO:0007669"/>
    <property type="project" value="UniProtKB-KW"/>
</dbReference>
<dbReference type="GO" id="GO:0009738">
    <property type="term" value="P:abscisic acid-activated signaling pathway"/>
    <property type="evidence" value="ECO:0007669"/>
    <property type="project" value="UniProtKB-KW"/>
</dbReference>
<dbReference type="GO" id="GO:0009789">
    <property type="term" value="P:positive regulation of abscisic acid-activated signaling pathway"/>
    <property type="evidence" value="ECO:0000315"/>
    <property type="project" value="UniProtKB"/>
</dbReference>
<dbReference type="CDD" id="cd01459">
    <property type="entry name" value="vWA_copine_like"/>
    <property type="match status" value="1"/>
</dbReference>
<dbReference type="Gene3D" id="3.30.40.10">
    <property type="entry name" value="Zinc/RING finger domain, C3HC4 (zinc finger)"/>
    <property type="match status" value="1"/>
</dbReference>
<dbReference type="InterPro" id="IPR010734">
    <property type="entry name" value="Copine_C"/>
</dbReference>
<dbReference type="InterPro" id="IPR052079">
    <property type="entry name" value="E3_ligase/Copine_domain"/>
</dbReference>
<dbReference type="InterPro" id="IPR002035">
    <property type="entry name" value="VWF_A"/>
</dbReference>
<dbReference type="InterPro" id="IPR036465">
    <property type="entry name" value="vWFA_dom_sf"/>
</dbReference>
<dbReference type="InterPro" id="IPR001841">
    <property type="entry name" value="Znf_RING"/>
</dbReference>
<dbReference type="InterPro" id="IPR013083">
    <property type="entry name" value="Znf_RING/FYVE/PHD"/>
</dbReference>
<dbReference type="PANTHER" id="PTHR45751">
    <property type="entry name" value="COPINE FAMILY PROTEIN 1"/>
    <property type="match status" value="1"/>
</dbReference>
<dbReference type="PANTHER" id="PTHR45751:SF30">
    <property type="entry name" value="E3 UBIQUITIN-PROTEIN LIGASE RGLG5"/>
    <property type="match status" value="1"/>
</dbReference>
<dbReference type="Pfam" id="PF07002">
    <property type="entry name" value="Copine"/>
    <property type="match status" value="1"/>
</dbReference>
<dbReference type="Pfam" id="PF13920">
    <property type="entry name" value="zf-C3HC4_3"/>
    <property type="match status" value="1"/>
</dbReference>
<dbReference type="SMART" id="SM00327">
    <property type="entry name" value="VWA"/>
    <property type="match status" value="1"/>
</dbReference>
<dbReference type="SUPFAM" id="SSF57850">
    <property type="entry name" value="RING/U-box"/>
    <property type="match status" value="1"/>
</dbReference>
<dbReference type="SUPFAM" id="SSF53300">
    <property type="entry name" value="vWA-like"/>
    <property type="match status" value="1"/>
</dbReference>
<dbReference type="PROSITE" id="PS50089">
    <property type="entry name" value="ZF_RING_2"/>
    <property type="match status" value="1"/>
</dbReference>